<evidence type="ECO:0000255" key="1">
    <source>
        <dbReference type="HAMAP-Rule" id="MF_03122"/>
    </source>
</evidence>
<evidence type="ECO:0000305" key="2"/>
<sequence length="256" mass="28874">MAVGKNKRLSKGKKGLKKKVVDPFTRKDWFDIKAPSTFENRNVGKTLINRSTGLKNAADGLKGRVVEVSLADLQGSEDHSYRKIKLRVDEVQGKNLLTNFHGLDFTSDKLRSLVRKWQSLVEANVTVKTSDDYVLRVFAIAFTKRQANQIKKTTYAQSSKLREVRKKMIEIMQREVSNVTLAQLTSKLIPEVIGREIEKSTQTIFPLQNVHIRKVKLLKQPKFDLGALLALHGEGSTEEKGKKVNAGFKDVVLESV</sequence>
<dbReference type="EMBL" id="CP000500">
    <property type="protein sequence ID" value="ABN67749.1"/>
    <property type="molecule type" value="Genomic_DNA"/>
</dbReference>
<dbReference type="RefSeq" id="XP_001385778.1">
    <property type="nucleotide sequence ID" value="XM_001385741.1"/>
</dbReference>
<dbReference type="SMR" id="A3LX67"/>
<dbReference type="FunCoup" id="A3LX67">
    <property type="interactions" value="1419"/>
</dbReference>
<dbReference type="STRING" id="322104.A3LX67"/>
<dbReference type="GeneID" id="4839968"/>
<dbReference type="KEGG" id="pic:PICST_90304"/>
<dbReference type="eggNOG" id="KOG1628">
    <property type="taxonomic scope" value="Eukaryota"/>
</dbReference>
<dbReference type="HOGENOM" id="CLU_062507_0_0_1"/>
<dbReference type="InParanoid" id="A3LX67"/>
<dbReference type="OMA" id="TRFKGHE"/>
<dbReference type="OrthoDB" id="9834376at2759"/>
<dbReference type="Proteomes" id="UP000002258">
    <property type="component" value="Chromosome 6"/>
</dbReference>
<dbReference type="GO" id="GO:0022627">
    <property type="term" value="C:cytosolic small ribosomal subunit"/>
    <property type="evidence" value="ECO:0007669"/>
    <property type="project" value="UniProtKB-UniRule"/>
</dbReference>
<dbReference type="GO" id="GO:0003735">
    <property type="term" value="F:structural constituent of ribosome"/>
    <property type="evidence" value="ECO:0007669"/>
    <property type="project" value="UniProtKB-UniRule"/>
</dbReference>
<dbReference type="GO" id="GO:0006412">
    <property type="term" value="P:translation"/>
    <property type="evidence" value="ECO:0007669"/>
    <property type="project" value="UniProtKB-UniRule"/>
</dbReference>
<dbReference type="HAMAP" id="MF_03122">
    <property type="entry name" value="Ribosomal_eS1_euk"/>
    <property type="match status" value="1"/>
</dbReference>
<dbReference type="InterPro" id="IPR001593">
    <property type="entry name" value="Ribosomal_eS1"/>
</dbReference>
<dbReference type="InterPro" id="IPR018281">
    <property type="entry name" value="Ribosomal_eS1_CS"/>
</dbReference>
<dbReference type="InterPro" id="IPR027500">
    <property type="entry name" value="Ribosomal_eS1_euk"/>
</dbReference>
<dbReference type="PANTHER" id="PTHR11830">
    <property type="entry name" value="40S RIBOSOMAL PROTEIN S3A"/>
    <property type="match status" value="1"/>
</dbReference>
<dbReference type="Pfam" id="PF01015">
    <property type="entry name" value="Ribosomal_S3Ae"/>
    <property type="match status" value="1"/>
</dbReference>
<dbReference type="SMART" id="SM01397">
    <property type="entry name" value="Ribosomal_S3Ae"/>
    <property type="match status" value="1"/>
</dbReference>
<dbReference type="PROSITE" id="PS01191">
    <property type="entry name" value="RIBOSOMAL_S3AE"/>
    <property type="match status" value="1"/>
</dbReference>
<proteinExistence type="inferred from homology"/>
<organism>
    <name type="scientific">Scheffersomyces stipitis (strain ATCC 58785 / CBS 6054 / NBRC 10063 / NRRL Y-11545)</name>
    <name type="common">Yeast</name>
    <name type="synonym">Pichia stipitis</name>
    <dbReference type="NCBI Taxonomy" id="322104"/>
    <lineage>
        <taxon>Eukaryota</taxon>
        <taxon>Fungi</taxon>
        <taxon>Dikarya</taxon>
        <taxon>Ascomycota</taxon>
        <taxon>Saccharomycotina</taxon>
        <taxon>Pichiomycetes</taxon>
        <taxon>Debaryomycetaceae</taxon>
        <taxon>Scheffersomyces</taxon>
    </lineage>
</organism>
<accession>A3LX67</accession>
<name>RS3A2_PICST</name>
<protein>
    <recommendedName>
        <fullName evidence="1">Small ribosomal subunit protein eS1B</fullName>
    </recommendedName>
    <alternativeName>
        <fullName evidence="2">40S ribosomal protein S1-B</fullName>
    </alternativeName>
</protein>
<keyword id="KW-0007">Acetylation</keyword>
<keyword id="KW-0963">Cytoplasm</keyword>
<keyword id="KW-1185">Reference proteome</keyword>
<keyword id="KW-0687">Ribonucleoprotein</keyword>
<keyword id="KW-0689">Ribosomal protein</keyword>
<gene>
    <name evidence="1" type="primary">RPS1B</name>
    <name type="ORF">PICST_90304</name>
</gene>
<reference key="1">
    <citation type="journal article" date="2007" name="Nat. Biotechnol.">
        <title>Genome sequence of the lignocellulose-bioconverting and xylose-fermenting yeast Pichia stipitis.</title>
        <authorList>
            <person name="Jeffries T.W."/>
            <person name="Grigoriev I.V."/>
            <person name="Grimwood J."/>
            <person name="Laplaza J.M."/>
            <person name="Aerts A."/>
            <person name="Salamov A."/>
            <person name="Schmutz J."/>
            <person name="Lindquist E."/>
            <person name="Dehal P."/>
            <person name="Shapiro H."/>
            <person name="Jin Y.-S."/>
            <person name="Passoth V."/>
            <person name="Richardson P.M."/>
        </authorList>
    </citation>
    <scope>NUCLEOTIDE SEQUENCE [LARGE SCALE GENOMIC DNA]</scope>
    <source>
        <strain>ATCC 58785 / CBS 6054 / NBRC 10063 / NRRL Y-11545</strain>
    </source>
</reference>
<comment type="subunit">
    <text evidence="1">Component of the small ribosomal subunit. Mature ribosomes consist of a small (40S) and a large (60S) subunit. The 40S subunit contains about 33 different proteins and 1 molecule of RNA (18S). The 60S subunit contains about 49 different proteins and 3 molecules of RNA (25S, 5.8S and 5S).</text>
</comment>
<comment type="subcellular location">
    <subcellularLocation>
        <location evidence="1">Cytoplasm</location>
    </subcellularLocation>
</comment>
<comment type="similarity">
    <text evidence="1">Belongs to the eukaryotic ribosomal protein eS1 family.</text>
</comment>
<feature type="initiator methionine" description="Removed" evidence="1">
    <location>
        <position position="1"/>
    </location>
</feature>
<feature type="chain" id="PRO_0000389400" description="Small ribosomal subunit protein eS1B">
    <location>
        <begin position="2"/>
        <end position="256"/>
    </location>
</feature>
<feature type="modified residue" description="N-acetylalanine; partial" evidence="1">
    <location>
        <position position="2"/>
    </location>
</feature>